<accession>Q646D2</accession>
<accession>Q5Y513</accession>
<protein>
    <recommendedName>
        <fullName>Taste receptor type 2 member 3</fullName>
        <shortName>T2R3</shortName>
    </recommendedName>
</protein>
<name>TA2R3_PANPA</name>
<organism>
    <name type="scientific">Pan paniscus</name>
    <name type="common">Pygmy chimpanzee</name>
    <name type="synonym">Bonobo</name>
    <dbReference type="NCBI Taxonomy" id="9597"/>
    <lineage>
        <taxon>Eukaryota</taxon>
        <taxon>Metazoa</taxon>
        <taxon>Chordata</taxon>
        <taxon>Craniata</taxon>
        <taxon>Vertebrata</taxon>
        <taxon>Euteleostomi</taxon>
        <taxon>Mammalia</taxon>
        <taxon>Eutheria</taxon>
        <taxon>Euarchontoglires</taxon>
        <taxon>Primates</taxon>
        <taxon>Haplorrhini</taxon>
        <taxon>Catarrhini</taxon>
        <taxon>Hominidae</taxon>
        <taxon>Pan</taxon>
    </lineage>
</organism>
<dbReference type="EMBL" id="AY724861">
    <property type="protein sequence ID" value="AAU21087.1"/>
    <property type="molecule type" value="Genomic_DNA"/>
</dbReference>
<dbReference type="EMBL" id="AY677133">
    <property type="protein sequence ID" value="AAV28562.1"/>
    <property type="status" value="ALT_INIT"/>
    <property type="molecule type" value="Genomic_DNA"/>
</dbReference>
<dbReference type="RefSeq" id="XP_003813428.1">
    <property type="nucleotide sequence ID" value="XM_003813380.2"/>
</dbReference>
<dbReference type="RefSeq" id="XP_034821009.2">
    <property type="nucleotide sequence ID" value="XM_034965118.3"/>
</dbReference>
<dbReference type="SMR" id="Q646D2"/>
<dbReference type="STRING" id="9597.ENSPPAP00000001543"/>
<dbReference type="GlyCosmos" id="Q646D2">
    <property type="glycosylation" value="1 site, No reported glycans"/>
</dbReference>
<dbReference type="GeneID" id="100995845"/>
<dbReference type="eggNOG" id="ENOG502SKRK">
    <property type="taxonomic scope" value="Eukaryota"/>
</dbReference>
<dbReference type="OMA" id="IDIFWTF"/>
<dbReference type="Proteomes" id="UP000240080">
    <property type="component" value="Unplaced"/>
</dbReference>
<dbReference type="GO" id="GO:0005886">
    <property type="term" value="C:plasma membrane"/>
    <property type="evidence" value="ECO:0007669"/>
    <property type="project" value="UniProtKB-ARBA"/>
</dbReference>
<dbReference type="GO" id="GO:0033038">
    <property type="term" value="F:bitter taste receptor activity"/>
    <property type="evidence" value="ECO:0007669"/>
    <property type="project" value="InterPro"/>
</dbReference>
<dbReference type="GO" id="GO:0004930">
    <property type="term" value="F:G protein-coupled receptor activity"/>
    <property type="evidence" value="ECO:0007669"/>
    <property type="project" value="UniProtKB-KW"/>
</dbReference>
<dbReference type="CDD" id="cd15020">
    <property type="entry name" value="7tm_TAS2R3"/>
    <property type="match status" value="1"/>
</dbReference>
<dbReference type="FunFam" id="1.20.1070.10:FF:000042">
    <property type="entry name" value="Taste receptor type 2 member 7"/>
    <property type="match status" value="1"/>
</dbReference>
<dbReference type="Gene3D" id="1.20.1070.10">
    <property type="entry name" value="Rhodopsin 7-helix transmembrane proteins"/>
    <property type="match status" value="1"/>
</dbReference>
<dbReference type="InterPro" id="IPR007960">
    <property type="entry name" value="TAS2R"/>
</dbReference>
<dbReference type="PANTHER" id="PTHR11394">
    <property type="entry name" value="TASTE RECEPTOR TYPE 2"/>
    <property type="match status" value="1"/>
</dbReference>
<dbReference type="PANTHER" id="PTHR11394:SF49">
    <property type="entry name" value="TASTE RECEPTOR TYPE 2 MEMBER 3"/>
    <property type="match status" value="1"/>
</dbReference>
<dbReference type="Pfam" id="PF05296">
    <property type="entry name" value="TAS2R"/>
    <property type="match status" value="1"/>
</dbReference>
<dbReference type="SUPFAM" id="SSF81321">
    <property type="entry name" value="Family A G protein-coupled receptor-like"/>
    <property type="match status" value="1"/>
</dbReference>
<sequence length="315" mass="35784">MGLTEGVFLILSGTQFTLGILVNCFIELVNGSSWFKTKRMSLSDFIITTLALLRIILLCIILTDSFLIEFSPNTHDSGIIMQIIDVSWTFTNHLSIWLATCLGVLYCLKIASFSHPTFLWLKWRVSRVMVWMLLGALLLSCGSTASLINEFKLYSVFRGIEATRNVTEHFRKKRSEYYLIHVLGTLWYLPPLIVSLASYSLLIFSLGRHTRQMLQNGTSSRDPTTEAHKRAIRIILSFFFLFLLYFLAFLIASFGNFLPKTKMAKMIGEVMTMFYPAGHSFILILGNSKLKQTFVVMLRCESGHLKPGSKGPIFS</sequence>
<proteinExistence type="inferred from homology"/>
<keyword id="KW-0297">G-protein coupled receptor</keyword>
<keyword id="KW-0325">Glycoprotein</keyword>
<keyword id="KW-0472">Membrane</keyword>
<keyword id="KW-0675">Receptor</keyword>
<keyword id="KW-1185">Reference proteome</keyword>
<keyword id="KW-0716">Sensory transduction</keyword>
<keyword id="KW-0919">Taste</keyword>
<keyword id="KW-0807">Transducer</keyword>
<keyword id="KW-0812">Transmembrane</keyword>
<keyword id="KW-1133">Transmembrane helix</keyword>
<comment type="function">
    <text evidence="1">Gustducin-coupled receptor implicated in the perception of bitter compounds in the oral cavity and the gastrointestinal tract. Signals through PLCB2 and the calcium-regulated cation channel TRPM5 (By similarity).</text>
</comment>
<comment type="subcellular location">
    <subcellularLocation>
        <location>Membrane</location>
        <topology>Multi-pass membrane protein</topology>
    </subcellularLocation>
</comment>
<comment type="miscellaneous">
    <text>Several bitter taste receptors are expressed in a single taste receptor cell.</text>
</comment>
<comment type="similarity">
    <text evidence="3">Belongs to the G-protein coupled receptor T2R family.</text>
</comment>
<comment type="sequence caution" evidence="3">
    <conflict type="erroneous initiation">
        <sequence resource="EMBL-CDS" id="AAV28562"/>
    </conflict>
</comment>
<evidence type="ECO:0000250" key="1"/>
<evidence type="ECO:0000255" key="2"/>
<evidence type="ECO:0000305" key="3"/>
<reference key="1">
    <citation type="journal article" date="2005" name="Mol. Biol. Evol.">
        <title>Evolution of bitter taste receptors in humans and apes.</title>
        <authorList>
            <person name="Fischer A."/>
            <person name="Gilad Y."/>
            <person name="Man O."/>
            <person name="Paeaebo S."/>
        </authorList>
    </citation>
    <scope>NUCLEOTIDE SEQUENCE [GENOMIC DNA]</scope>
</reference>
<reference key="2">
    <citation type="journal article" date="2004" name="Proc. Natl. Acad. Sci. U.S.A.">
        <title>Divergence of T2R chemosensory receptor families in humans, bonobos, and chimpanzees.</title>
        <authorList>
            <person name="Parry C.M."/>
            <person name="Erkner A."/>
            <person name="le Coutre J."/>
        </authorList>
    </citation>
    <scope>NUCLEOTIDE SEQUENCE [GENOMIC DNA]</scope>
</reference>
<gene>
    <name type="primary">TAS2R3</name>
</gene>
<feature type="chain" id="PRO_0000082198" description="Taste receptor type 2 member 3">
    <location>
        <begin position="1"/>
        <end position="315"/>
    </location>
</feature>
<feature type="topological domain" description="Extracellular" evidence="2">
    <location>
        <begin position="1"/>
        <end position="5"/>
    </location>
</feature>
<feature type="transmembrane region" description="Helical; Name=1" evidence="2">
    <location>
        <begin position="6"/>
        <end position="26"/>
    </location>
</feature>
<feature type="topological domain" description="Cytoplasmic" evidence="2">
    <location>
        <begin position="27"/>
        <end position="41"/>
    </location>
</feature>
<feature type="transmembrane region" description="Helical; Name=2" evidence="2">
    <location>
        <begin position="42"/>
        <end position="62"/>
    </location>
</feature>
<feature type="topological domain" description="Extracellular" evidence="2">
    <location>
        <begin position="63"/>
        <end position="93"/>
    </location>
</feature>
<feature type="transmembrane region" description="Helical; Name=3" evidence="2">
    <location>
        <begin position="94"/>
        <end position="114"/>
    </location>
</feature>
<feature type="topological domain" description="Cytoplasmic" evidence="2">
    <location>
        <begin position="115"/>
        <end position="127"/>
    </location>
</feature>
<feature type="transmembrane region" description="Helical; Name=4" evidence="2">
    <location>
        <begin position="128"/>
        <end position="148"/>
    </location>
</feature>
<feature type="topological domain" description="Extracellular" evidence="2">
    <location>
        <begin position="149"/>
        <end position="185"/>
    </location>
</feature>
<feature type="transmembrane region" description="Helical; Name=5" evidence="2">
    <location>
        <begin position="186"/>
        <end position="206"/>
    </location>
</feature>
<feature type="topological domain" description="Cytoplasmic" evidence="2">
    <location>
        <begin position="207"/>
        <end position="233"/>
    </location>
</feature>
<feature type="transmembrane region" description="Helical; Name=6" evidence="2">
    <location>
        <begin position="234"/>
        <end position="254"/>
    </location>
</feature>
<feature type="topological domain" description="Extracellular" evidence="2">
    <location>
        <begin position="255"/>
        <end position="265"/>
    </location>
</feature>
<feature type="transmembrane region" description="Helical; Name=7" evidence="2">
    <location>
        <begin position="266"/>
        <end position="286"/>
    </location>
</feature>
<feature type="topological domain" description="Cytoplasmic" evidence="2">
    <location>
        <begin position="287"/>
        <end position="315"/>
    </location>
</feature>
<feature type="glycosylation site" description="N-linked (GlcNAc...) asparagine" evidence="2">
    <location>
        <position position="165"/>
    </location>
</feature>